<keyword id="KW-0678">Repressor</keyword>
<keyword id="KW-0694">RNA-binding</keyword>
<keyword id="KW-0810">Translation regulation</keyword>
<dbReference type="EMBL" id="M33532">
    <property type="protein sequence ID" value="AAA72825.1"/>
    <property type="molecule type" value="mRNA"/>
</dbReference>
<dbReference type="RefSeq" id="YP_002854006.1">
    <property type="nucleotide sequence ID" value="NC_012635.1"/>
</dbReference>
<dbReference type="SMR" id="P69628"/>
<dbReference type="GeneID" id="7803559"/>
<dbReference type="KEGG" id="vg:7803559"/>
<dbReference type="OrthoDB" id="14181at10239"/>
<dbReference type="GO" id="GO:0003723">
    <property type="term" value="F:RNA binding"/>
    <property type="evidence" value="ECO:0007669"/>
    <property type="project" value="UniProtKB-KW"/>
</dbReference>
<dbReference type="GO" id="GO:0006417">
    <property type="term" value="P:regulation of translation"/>
    <property type="evidence" value="ECO:0007669"/>
    <property type="project" value="UniProtKB-KW"/>
</dbReference>
<dbReference type="Gene3D" id="3.30.70.650">
    <property type="entry name" value="Translation repressor RegA"/>
    <property type="match status" value="1"/>
</dbReference>
<dbReference type="InterPro" id="IPR002702">
    <property type="entry name" value="Transl_repress_RegA"/>
</dbReference>
<dbReference type="InterPro" id="IPR036516">
    <property type="entry name" value="Transl_repress_RegA_sf"/>
</dbReference>
<dbReference type="Pfam" id="PF01818">
    <property type="entry name" value="Translat_reg"/>
    <property type="match status" value="1"/>
</dbReference>
<dbReference type="SUPFAM" id="SSF55064">
    <property type="entry name" value="Translational regulator protein regA"/>
    <property type="match status" value="1"/>
</dbReference>
<gene>
    <name type="primary">regA</name>
</gene>
<comment type="function">
    <text evidence="1">Controls the translation of a number of proteins (such as regA itself, rIIB and at least 35 others) by binding to their mRNA.</text>
</comment>
<organism>
    <name type="scientific">Enterobacteria phage RB51</name>
    <name type="common">Bacteriophage RB51</name>
    <dbReference type="NCBI Taxonomy" id="10693"/>
    <lineage>
        <taxon>Viruses</taxon>
        <taxon>Duplodnaviria</taxon>
        <taxon>Heunggongvirae</taxon>
        <taxon>Uroviricota</taxon>
        <taxon>Caudoviricetes</taxon>
        <taxon>Straboviridae</taxon>
        <taxon>Tevenvirinae</taxon>
        <taxon>Tequatrovirus</taxon>
        <taxon>Tequatrovirus RB51</taxon>
    </lineage>
</organism>
<feature type="chain" id="PRO_0000164971" description="Translation repressor protein">
    <location>
        <begin position="1"/>
        <end position="122"/>
    </location>
</feature>
<feature type="DNA-binding region" description="H-T-H motif" evidence="2">
    <location>
        <begin position="15"/>
        <end position="37"/>
    </location>
</feature>
<organismHost>
    <name type="scientific">Escherichia coli</name>
    <dbReference type="NCBI Taxonomy" id="562"/>
</organismHost>
<reference key="1">
    <citation type="journal article" date="1990" name="J. Bacteriol.">
        <title>Sequence analysis of conserved regA and variable orf43.1 genes in T4-like bacteriophages.</title>
        <authorList>
            <person name="Miller E.S."/>
            <person name="Jozwik C.E."/>
        </authorList>
    </citation>
    <scope>NUCLEOTIDE SEQUENCE [MRNA]</scope>
</reference>
<protein>
    <recommendedName>
        <fullName>Translation repressor protein</fullName>
    </recommendedName>
</protein>
<proteinExistence type="evidence at transcript level"/>
<sequence length="122" mass="14619">MIEITLKKPEDFLKVKETLTRMGIANNKDKVLYQSCHILQKKGLYYIVHFKEMLRMDGRQVEMTEEDEVRRDSIAWLLEDWGLIEIVPGQRTFMKDLTNNFRVISFKQKHEWKLVPKYTIGN</sequence>
<accession>P69628</accession>
<accession>P04528</accession>
<name>REGA_BPR51</name>
<evidence type="ECO:0000250" key="1"/>
<evidence type="ECO:0000255" key="2"/>